<gene>
    <name evidence="1" type="primary">ribH</name>
    <name type="ordered locus">Cla_0540</name>
</gene>
<proteinExistence type="inferred from homology"/>
<sequence length="156" mass="16643">MKIIEGNLSLKGDEKIAIINARFNHIITDRLVEGAKDAFLRHGGKEENLSLILVPGAFEIPFALKQACESKKFDGICCVGAVIRGSTPHFDYVAAETTKGIASVGLGANVPVSFGVLTTDTLEQAIERAGSKAGNKGFEAMLTVVEMLNLIQKIKA</sequence>
<dbReference type="EC" id="2.5.1.78" evidence="1"/>
<dbReference type="EMBL" id="CP000932">
    <property type="protein sequence ID" value="ACM63874.1"/>
    <property type="molecule type" value="Genomic_DNA"/>
</dbReference>
<dbReference type="SMR" id="B9KFN9"/>
<dbReference type="STRING" id="306263.Cla_0540"/>
<dbReference type="KEGG" id="cla:CLA_0540"/>
<dbReference type="eggNOG" id="COG0054">
    <property type="taxonomic scope" value="Bacteria"/>
</dbReference>
<dbReference type="HOGENOM" id="CLU_089358_1_1_7"/>
<dbReference type="UniPathway" id="UPA00275">
    <property type="reaction ID" value="UER00404"/>
</dbReference>
<dbReference type="Proteomes" id="UP000007727">
    <property type="component" value="Chromosome"/>
</dbReference>
<dbReference type="GO" id="GO:0005829">
    <property type="term" value="C:cytosol"/>
    <property type="evidence" value="ECO:0007669"/>
    <property type="project" value="TreeGrafter"/>
</dbReference>
<dbReference type="GO" id="GO:0009349">
    <property type="term" value="C:riboflavin synthase complex"/>
    <property type="evidence" value="ECO:0007669"/>
    <property type="project" value="InterPro"/>
</dbReference>
<dbReference type="GO" id="GO:0000906">
    <property type="term" value="F:6,7-dimethyl-8-ribityllumazine synthase activity"/>
    <property type="evidence" value="ECO:0007669"/>
    <property type="project" value="UniProtKB-UniRule"/>
</dbReference>
<dbReference type="GO" id="GO:0009231">
    <property type="term" value="P:riboflavin biosynthetic process"/>
    <property type="evidence" value="ECO:0007669"/>
    <property type="project" value="UniProtKB-UniRule"/>
</dbReference>
<dbReference type="CDD" id="cd09209">
    <property type="entry name" value="Lumazine_synthase-I"/>
    <property type="match status" value="1"/>
</dbReference>
<dbReference type="FunFam" id="3.40.50.960:FF:000001">
    <property type="entry name" value="6,7-dimethyl-8-ribityllumazine synthase"/>
    <property type="match status" value="1"/>
</dbReference>
<dbReference type="Gene3D" id="3.40.50.960">
    <property type="entry name" value="Lumazine/riboflavin synthase"/>
    <property type="match status" value="1"/>
</dbReference>
<dbReference type="HAMAP" id="MF_00178">
    <property type="entry name" value="Lumazine_synth"/>
    <property type="match status" value="1"/>
</dbReference>
<dbReference type="InterPro" id="IPR034964">
    <property type="entry name" value="LS"/>
</dbReference>
<dbReference type="InterPro" id="IPR002180">
    <property type="entry name" value="LS/RS"/>
</dbReference>
<dbReference type="InterPro" id="IPR036467">
    <property type="entry name" value="LS/RS_sf"/>
</dbReference>
<dbReference type="NCBIfam" id="TIGR00114">
    <property type="entry name" value="lumazine-synth"/>
    <property type="match status" value="1"/>
</dbReference>
<dbReference type="NCBIfam" id="NF000812">
    <property type="entry name" value="PRK00061.1-4"/>
    <property type="match status" value="1"/>
</dbReference>
<dbReference type="PANTHER" id="PTHR21058:SF0">
    <property type="entry name" value="6,7-DIMETHYL-8-RIBITYLLUMAZINE SYNTHASE"/>
    <property type="match status" value="1"/>
</dbReference>
<dbReference type="PANTHER" id="PTHR21058">
    <property type="entry name" value="6,7-DIMETHYL-8-RIBITYLLUMAZINE SYNTHASE DMRL SYNTHASE LUMAZINE SYNTHASE"/>
    <property type="match status" value="1"/>
</dbReference>
<dbReference type="Pfam" id="PF00885">
    <property type="entry name" value="DMRL_synthase"/>
    <property type="match status" value="1"/>
</dbReference>
<dbReference type="SUPFAM" id="SSF52121">
    <property type="entry name" value="Lumazine synthase"/>
    <property type="match status" value="1"/>
</dbReference>
<accession>B9KFN9</accession>
<evidence type="ECO:0000255" key="1">
    <source>
        <dbReference type="HAMAP-Rule" id="MF_00178"/>
    </source>
</evidence>
<comment type="function">
    <text evidence="1">Catalyzes the formation of 6,7-dimethyl-8-ribityllumazine by condensation of 5-amino-6-(D-ribitylamino)uracil with 3,4-dihydroxy-2-butanone 4-phosphate. This is the penultimate step in the biosynthesis of riboflavin.</text>
</comment>
<comment type="catalytic activity">
    <reaction evidence="1">
        <text>(2S)-2-hydroxy-3-oxobutyl phosphate + 5-amino-6-(D-ribitylamino)uracil = 6,7-dimethyl-8-(1-D-ribityl)lumazine + phosphate + 2 H2O + H(+)</text>
        <dbReference type="Rhea" id="RHEA:26152"/>
        <dbReference type="ChEBI" id="CHEBI:15377"/>
        <dbReference type="ChEBI" id="CHEBI:15378"/>
        <dbReference type="ChEBI" id="CHEBI:15934"/>
        <dbReference type="ChEBI" id="CHEBI:43474"/>
        <dbReference type="ChEBI" id="CHEBI:58201"/>
        <dbReference type="ChEBI" id="CHEBI:58830"/>
        <dbReference type="EC" id="2.5.1.78"/>
    </reaction>
</comment>
<comment type="pathway">
    <text evidence="1">Cofactor biosynthesis; riboflavin biosynthesis; riboflavin from 2-hydroxy-3-oxobutyl phosphate and 5-amino-6-(D-ribitylamino)uracil: step 1/2.</text>
</comment>
<comment type="similarity">
    <text evidence="1">Belongs to the DMRL synthase family.</text>
</comment>
<feature type="chain" id="PRO_1000195468" description="6,7-dimethyl-8-ribityllumazine synthase">
    <location>
        <begin position="1"/>
        <end position="156"/>
    </location>
</feature>
<feature type="active site" description="Proton donor" evidence="1">
    <location>
        <position position="89"/>
    </location>
</feature>
<feature type="binding site" evidence="1">
    <location>
        <position position="23"/>
    </location>
    <ligand>
        <name>5-amino-6-(D-ribitylamino)uracil</name>
        <dbReference type="ChEBI" id="CHEBI:15934"/>
    </ligand>
</feature>
<feature type="binding site" evidence="1">
    <location>
        <begin position="57"/>
        <end position="59"/>
    </location>
    <ligand>
        <name>5-amino-6-(D-ribitylamino)uracil</name>
        <dbReference type="ChEBI" id="CHEBI:15934"/>
    </ligand>
</feature>
<feature type="binding site" evidence="1">
    <location>
        <begin position="81"/>
        <end position="83"/>
    </location>
    <ligand>
        <name>5-amino-6-(D-ribitylamino)uracil</name>
        <dbReference type="ChEBI" id="CHEBI:15934"/>
    </ligand>
</feature>
<feature type="binding site" evidence="1">
    <location>
        <begin position="86"/>
        <end position="87"/>
    </location>
    <ligand>
        <name>(2S)-2-hydroxy-3-oxobutyl phosphate</name>
        <dbReference type="ChEBI" id="CHEBI:58830"/>
    </ligand>
</feature>
<feature type="binding site" evidence="1">
    <location>
        <position position="114"/>
    </location>
    <ligand>
        <name>5-amino-6-(D-ribitylamino)uracil</name>
        <dbReference type="ChEBI" id="CHEBI:15934"/>
    </ligand>
</feature>
<feature type="binding site" evidence="1">
    <location>
        <position position="128"/>
    </location>
    <ligand>
        <name>(2S)-2-hydroxy-3-oxobutyl phosphate</name>
        <dbReference type="ChEBI" id="CHEBI:58830"/>
    </ligand>
</feature>
<protein>
    <recommendedName>
        <fullName evidence="1">6,7-dimethyl-8-ribityllumazine synthase</fullName>
        <shortName evidence="1">DMRL synthase</shortName>
        <shortName evidence="1">LS</shortName>
        <shortName evidence="1">Lumazine synthase</shortName>
        <ecNumber evidence="1">2.5.1.78</ecNumber>
    </recommendedName>
</protein>
<keyword id="KW-1185">Reference proteome</keyword>
<keyword id="KW-0686">Riboflavin biosynthesis</keyword>
<keyword id="KW-0808">Transferase</keyword>
<name>RISB_CAMLR</name>
<organism>
    <name type="scientific">Campylobacter lari (strain RM2100 / D67 / ATCC BAA-1060)</name>
    <dbReference type="NCBI Taxonomy" id="306263"/>
    <lineage>
        <taxon>Bacteria</taxon>
        <taxon>Pseudomonadati</taxon>
        <taxon>Campylobacterota</taxon>
        <taxon>Epsilonproteobacteria</taxon>
        <taxon>Campylobacterales</taxon>
        <taxon>Campylobacteraceae</taxon>
        <taxon>Campylobacter</taxon>
    </lineage>
</organism>
<reference key="1">
    <citation type="journal article" date="2008" name="Foodborne Pathog. Dis.">
        <title>The complete genome sequence and analysis of the human pathogen Campylobacter lari.</title>
        <authorList>
            <person name="Miller W.G."/>
            <person name="Wang G."/>
            <person name="Binnewies T.T."/>
            <person name="Parker C.T."/>
        </authorList>
    </citation>
    <scope>NUCLEOTIDE SEQUENCE [LARGE SCALE GENOMIC DNA]</scope>
    <source>
        <strain>RM2100 / D67 / ATCC BAA-1060</strain>
    </source>
</reference>